<keyword id="KW-0507">mRNA processing</keyword>
<keyword id="KW-0508">mRNA splicing</keyword>
<keyword id="KW-0539">Nucleus</keyword>
<keyword id="KW-1185">Reference proteome</keyword>
<keyword id="KW-0747">Spliceosome</keyword>
<organism>
    <name type="scientific">Gallus gallus</name>
    <name type="common">Chicken</name>
    <dbReference type="NCBI Taxonomy" id="9031"/>
    <lineage>
        <taxon>Eukaryota</taxon>
        <taxon>Metazoa</taxon>
        <taxon>Chordata</taxon>
        <taxon>Craniata</taxon>
        <taxon>Vertebrata</taxon>
        <taxon>Euteleostomi</taxon>
        <taxon>Archelosauria</taxon>
        <taxon>Archosauria</taxon>
        <taxon>Dinosauria</taxon>
        <taxon>Saurischia</taxon>
        <taxon>Theropoda</taxon>
        <taxon>Coelurosauria</taxon>
        <taxon>Aves</taxon>
        <taxon>Neognathae</taxon>
        <taxon>Galloanserae</taxon>
        <taxon>Galliformes</taxon>
        <taxon>Phasianidae</taxon>
        <taxon>Phasianinae</taxon>
        <taxon>Gallus</taxon>
    </lineage>
</organism>
<protein>
    <recommendedName>
        <fullName>Pre-mRNA-splicing factor CWC22 homolog</fullName>
    </recommendedName>
    <alternativeName>
        <fullName>Nucampholin homolog</fullName>
    </alternativeName>
</protein>
<proteinExistence type="evidence at transcript level"/>
<comment type="function">
    <text evidence="1">Required for pre-mRNA splicing as component of the spliceosome. Promotes exon-junction complex (EJC) assembly.</text>
</comment>
<comment type="subunit">
    <text evidence="1">Component of the pre-catalytic spliceosome B and the catalytic spliceosome C complexes. Component of the minor spliceosome, which splices U12-type introns (By similarity).</text>
</comment>
<comment type="subcellular location">
    <subcellularLocation>
        <location evidence="1">Nucleus</location>
    </subcellularLocation>
    <subcellularLocation>
        <location evidence="1">Nucleus speckle</location>
    </subcellularLocation>
    <text evidence="1">Concentrates around speckles, which are sites of pre-mRNA synthesis and processing, where it colocalizes with EJC core proteins.</text>
</comment>
<comment type="similarity">
    <text evidence="4">Belongs to the CWC22 family.</text>
</comment>
<comment type="sequence caution" evidence="4">
    <conflict type="erroneous initiation">
        <sequence resource="EMBL-CDS" id="CAG31840"/>
    </conflict>
</comment>
<name>CWC22_CHICK</name>
<accession>Q5ZKA3</accession>
<dbReference type="EMBL" id="AJ720181">
    <property type="protein sequence ID" value="CAG31840.1"/>
    <property type="status" value="ALT_INIT"/>
    <property type="molecule type" value="mRNA"/>
</dbReference>
<dbReference type="SMR" id="Q5ZKA3"/>
<dbReference type="FunCoup" id="Q5ZKA3">
    <property type="interactions" value="2344"/>
</dbReference>
<dbReference type="STRING" id="9031.ENSGALP00000014627"/>
<dbReference type="PaxDb" id="9031-ENSGALP00000043058"/>
<dbReference type="VEuPathDB" id="HostDB:geneid_424123"/>
<dbReference type="eggNOG" id="KOG2140">
    <property type="taxonomic scope" value="Eukaryota"/>
</dbReference>
<dbReference type="InParanoid" id="Q5ZKA3"/>
<dbReference type="OrthoDB" id="1924287at2759"/>
<dbReference type="PhylomeDB" id="Q5ZKA3"/>
<dbReference type="Proteomes" id="UP000000539">
    <property type="component" value="Unassembled WGS sequence"/>
</dbReference>
<dbReference type="GO" id="GO:0071013">
    <property type="term" value="C:catalytic step 2 spliceosome"/>
    <property type="evidence" value="ECO:0000318"/>
    <property type="project" value="GO_Central"/>
</dbReference>
<dbReference type="GO" id="GO:0016607">
    <property type="term" value="C:nuclear speck"/>
    <property type="evidence" value="ECO:0007669"/>
    <property type="project" value="UniProtKB-SubCell"/>
</dbReference>
<dbReference type="GO" id="GO:0005634">
    <property type="term" value="C:nucleus"/>
    <property type="evidence" value="ECO:0000250"/>
    <property type="project" value="UniProtKB"/>
</dbReference>
<dbReference type="GO" id="GO:0005681">
    <property type="term" value="C:spliceosomal complex"/>
    <property type="evidence" value="ECO:0000250"/>
    <property type="project" value="UniProtKB"/>
</dbReference>
<dbReference type="GO" id="GO:0071006">
    <property type="term" value="C:U2-type catalytic step 1 spliceosome"/>
    <property type="evidence" value="ECO:0000250"/>
    <property type="project" value="UniProtKB"/>
</dbReference>
<dbReference type="GO" id="GO:0071007">
    <property type="term" value="C:U2-type catalytic step 2 spliceosome"/>
    <property type="evidence" value="ECO:0000250"/>
    <property type="project" value="UniProtKB"/>
</dbReference>
<dbReference type="GO" id="GO:0071005">
    <property type="term" value="C:U2-type precatalytic spliceosome"/>
    <property type="evidence" value="ECO:0000250"/>
    <property type="project" value="UniProtKB"/>
</dbReference>
<dbReference type="GO" id="GO:0003723">
    <property type="term" value="F:RNA binding"/>
    <property type="evidence" value="ECO:0000250"/>
    <property type="project" value="UniProtKB"/>
</dbReference>
<dbReference type="GO" id="GO:0000398">
    <property type="term" value="P:mRNA splicing, via spliceosome"/>
    <property type="evidence" value="ECO:0000250"/>
    <property type="project" value="UniProtKB"/>
</dbReference>
<dbReference type="FunFam" id="1.25.40.180:FF:000004">
    <property type="entry name" value="pre-mRNA-splicing factor CWC22 homolog"/>
    <property type="match status" value="1"/>
</dbReference>
<dbReference type="Gene3D" id="1.25.40.180">
    <property type="match status" value="1"/>
</dbReference>
<dbReference type="InterPro" id="IPR016024">
    <property type="entry name" value="ARM-type_fold"/>
</dbReference>
<dbReference type="InterPro" id="IPR050781">
    <property type="entry name" value="CWC22_splicing_factor"/>
</dbReference>
<dbReference type="InterPro" id="IPR003891">
    <property type="entry name" value="Initiation_fac_eIF4g_MI"/>
</dbReference>
<dbReference type="InterPro" id="IPR003890">
    <property type="entry name" value="MIF4G-like_typ-3"/>
</dbReference>
<dbReference type="PANTHER" id="PTHR18034">
    <property type="entry name" value="CELL CYCLE CONTROL PROTEIN CWF22-RELATED"/>
    <property type="match status" value="1"/>
</dbReference>
<dbReference type="PANTHER" id="PTHR18034:SF3">
    <property type="entry name" value="PRE-MRNA-SPLICING FACTOR CWC22 HOMOLOG"/>
    <property type="match status" value="1"/>
</dbReference>
<dbReference type="Pfam" id="PF02847">
    <property type="entry name" value="MA3"/>
    <property type="match status" value="1"/>
</dbReference>
<dbReference type="Pfam" id="PF02854">
    <property type="entry name" value="MIF4G"/>
    <property type="match status" value="1"/>
</dbReference>
<dbReference type="SMART" id="SM00544">
    <property type="entry name" value="MA3"/>
    <property type="match status" value="1"/>
</dbReference>
<dbReference type="SMART" id="SM00543">
    <property type="entry name" value="MIF4G"/>
    <property type="match status" value="1"/>
</dbReference>
<dbReference type="SUPFAM" id="SSF48371">
    <property type="entry name" value="ARM repeat"/>
    <property type="match status" value="1"/>
</dbReference>
<dbReference type="PROSITE" id="PS51366">
    <property type="entry name" value="MI"/>
    <property type="match status" value="1"/>
</dbReference>
<gene>
    <name type="primary">CWC22</name>
    <name type="synonym">NCM</name>
    <name type="ORF">RCJMB04_12b15</name>
</gene>
<sequence>MKSRVTQINHGSNHERKERYSPRHRSLTPEDRDVERDRSRSPRRRRYSDDSRYDQEYSRREYYDDRSSEGRRMERGRDRYYEKWEERDYDRRRKRRLSSPDHRSPERSTVQGSNTHEEATSKKKKEEVDPILTRTGGAYIPPAKLRMMQEQITDKNSLAYQRMSWEALKKSINGLVNKVNVSNIENIIHELLQENIVRGRGLLSRSILQAQGASPIFTHVYAALVAIINSKFPNIGELILKRLILNFRKGYRRNDKQLCLTSSKFVAHLMNQNVAHEVLCLEMLTLLLERPTDDSIEVAIGFLKESGLKLTEVSPRGINAIFDRLRHILHESKIDMRVQYMIEVMFAVRKDGFKDHPIIPEGLDLVEEEDQFTHMLPLEDEYNPEDVLNVFKMDPNFMENEEKYKALKKEILDEGDSESEPDQEAGSSDEEEEEDEEEDEDGQKVTVHDKTEINLVPSVGTIYLAIQSSLDFEECAHKLLKMDFPESQTKELCNMILDCCAQQRTYEKFFGLLAGRFCMLKKEYMESFEAIFKEQYDTIHRLETNKLRNVAKMFAHLLYTDSIPWSVLECIILSEETTTSSSRIFVKIFFQELSEYMGLPNLNARLKDITLQPFFEGLLPRDNPRNTRFAINFFTSIGLGGLTDELREHLKNAPKMIMTQKQDVESSDSSSSSETDSSSDSDSDSSSSSSESSSSSDSSSSSSDSSDSDASKAKKRRTQKKNRESDKASRKKQEKKRKSLEKKTGRRRQEDRSDSESKSERNHRNLREAHRRDDTSKYHHRDESNGRDDYEAYRRDDVSKYHQRDESNGRDNYHSGRDRDHERSKDLENKHSNSKLKKAERRASFSDDESYRHGSRDNGHRSRKRERSKSGERSYNKSSPREEEDDHRYRNGSERLREKYNHYSDQYRESRKHEDRRRENSPHRRK</sequence>
<evidence type="ECO:0000250" key="1">
    <source>
        <dbReference type="UniProtKB" id="Q9HCG8"/>
    </source>
</evidence>
<evidence type="ECO:0000255" key="2">
    <source>
        <dbReference type="PROSITE-ProRule" id="PRU00698"/>
    </source>
</evidence>
<evidence type="ECO:0000256" key="3">
    <source>
        <dbReference type="SAM" id="MobiDB-lite"/>
    </source>
</evidence>
<evidence type="ECO:0000305" key="4"/>
<reference key="1">
    <citation type="journal article" date="2005" name="Genome Biol.">
        <title>Full-length cDNAs from chicken bursal lymphocytes to facilitate gene function analysis.</title>
        <authorList>
            <person name="Caldwell R.B."/>
            <person name="Kierzek A.M."/>
            <person name="Arakawa H."/>
            <person name="Bezzubov Y."/>
            <person name="Zaim J."/>
            <person name="Fiedler P."/>
            <person name="Kutter S."/>
            <person name="Blagodatski A."/>
            <person name="Kostovska D."/>
            <person name="Koter M."/>
            <person name="Plachy J."/>
            <person name="Carninci P."/>
            <person name="Hayashizaki Y."/>
            <person name="Buerstedde J.-M."/>
        </authorList>
    </citation>
    <scope>NUCLEOTIDE SEQUENCE [LARGE SCALE MRNA]</scope>
    <source>
        <strain>CB</strain>
        <tissue>Bursa of Fabricius</tissue>
    </source>
</reference>
<feature type="chain" id="PRO_0000302008" description="Pre-mRNA-splicing factor CWC22 homolog">
    <location>
        <begin position="1"/>
        <end position="926"/>
    </location>
</feature>
<feature type="domain" description="MIF4G" evidence="2">
    <location>
        <begin position="169"/>
        <end position="352"/>
    </location>
</feature>
<feature type="domain" description="MI" evidence="2">
    <location>
        <begin position="457"/>
        <end position="573"/>
    </location>
</feature>
<feature type="region of interest" description="Disordered" evidence="3">
    <location>
        <begin position="1"/>
        <end position="77"/>
    </location>
</feature>
<feature type="region of interest" description="Disordered" evidence="3">
    <location>
        <begin position="91"/>
        <end position="135"/>
    </location>
</feature>
<feature type="region of interest" description="Disordered" evidence="3">
    <location>
        <begin position="412"/>
        <end position="450"/>
    </location>
</feature>
<feature type="region of interest" description="Disordered" evidence="3">
    <location>
        <begin position="658"/>
        <end position="926"/>
    </location>
</feature>
<feature type="compositionally biased region" description="Polar residues" evidence="3">
    <location>
        <begin position="1"/>
        <end position="11"/>
    </location>
</feature>
<feature type="compositionally biased region" description="Basic and acidic residues" evidence="3">
    <location>
        <begin position="12"/>
        <end position="40"/>
    </location>
</feature>
<feature type="compositionally biased region" description="Basic and acidic residues" evidence="3">
    <location>
        <begin position="47"/>
        <end position="77"/>
    </location>
</feature>
<feature type="compositionally biased region" description="Basic and acidic residues" evidence="3">
    <location>
        <begin position="115"/>
        <end position="128"/>
    </location>
</feature>
<feature type="compositionally biased region" description="Acidic residues" evidence="3">
    <location>
        <begin position="413"/>
        <end position="441"/>
    </location>
</feature>
<feature type="compositionally biased region" description="Low complexity" evidence="3">
    <location>
        <begin position="667"/>
        <end position="676"/>
    </location>
</feature>
<feature type="compositionally biased region" description="Low complexity" evidence="3">
    <location>
        <begin position="684"/>
        <end position="705"/>
    </location>
</feature>
<feature type="compositionally biased region" description="Basic residues" evidence="3">
    <location>
        <begin position="729"/>
        <end position="740"/>
    </location>
</feature>
<feature type="compositionally biased region" description="Basic and acidic residues" evidence="3">
    <location>
        <begin position="741"/>
        <end position="831"/>
    </location>
</feature>
<feature type="compositionally biased region" description="Basic and acidic residues" evidence="3">
    <location>
        <begin position="841"/>
        <end position="860"/>
    </location>
</feature>
<feature type="compositionally biased region" description="Basic and acidic residues" evidence="3">
    <location>
        <begin position="868"/>
        <end position="926"/>
    </location>
</feature>